<dbReference type="EMBL" id="EU124451">
    <property type="protein sequence ID" value="ABW97330.1"/>
    <property type="molecule type" value="Genomic_DNA"/>
</dbReference>
<dbReference type="SMR" id="P0DL53"/>
<dbReference type="GO" id="GO:0005576">
    <property type="term" value="C:extracellular region"/>
    <property type="evidence" value="ECO:0007669"/>
    <property type="project" value="UniProtKB-SubCell"/>
</dbReference>
<dbReference type="GO" id="GO:0042151">
    <property type="term" value="C:nematocyst"/>
    <property type="evidence" value="ECO:0007669"/>
    <property type="project" value="UniProtKB-SubCell"/>
</dbReference>
<dbReference type="GO" id="GO:0017080">
    <property type="term" value="F:sodium channel regulator activity"/>
    <property type="evidence" value="ECO:0007669"/>
    <property type="project" value="UniProtKB-KW"/>
</dbReference>
<dbReference type="GO" id="GO:0090729">
    <property type="term" value="F:toxin activity"/>
    <property type="evidence" value="ECO:0007669"/>
    <property type="project" value="UniProtKB-KW"/>
</dbReference>
<dbReference type="Gene3D" id="2.20.20.10">
    <property type="entry name" value="Anthopleurin-A"/>
    <property type="match status" value="1"/>
</dbReference>
<dbReference type="InterPro" id="IPR023355">
    <property type="entry name" value="Myo_ane_neurotoxin_sf"/>
</dbReference>
<dbReference type="Pfam" id="PF00706">
    <property type="entry name" value="Toxin_4"/>
    <property type="match status" value="1"/>
</dbReference>
<dbReference type="SUPFAM" id="SSF57392">
    <property type="entry name" value="Defensin-like"/>
    <property type="match status" value="1"/>
</dbReference>
<sequence>MMNRLLVFLMLGAAFMLVVSAIDQDANEDINKRGIPCLCDSDGPSVRGNTLSGIIWLAGCPSGWHNCKKHGPTIGWCCKQ</sequence>
<organism>
    <name type="scientific">Anemonia viridis</name>
    <name type="common">Snakelocks anemone</name>
    <dbReference type="NCBI Taxonomy" id="51769"/>
    <lineage>
        <taxon>Eukaryota</taxon>
        <taxon>Metazoa</taxon>
        <taxon>Cnidaria</taxon>
        <taxon>Anthozoa</taxon>
        <taxon>Hexacorallia</taxon>
        <taxon>Actiniaria</taxon>
        <taxon>Actiniidae</taxon>
        <taxon>Anemonia</taxon>
    </lineage>
</organism>
<name>NA125_ANEVI</name>
<comment type="function">
    <text evidence="1 4 5">Binds specifically to voltage-gated sodium channels (Nav) (site 3), thereby delaying their inactivation during signal transduction (PubMed:19609479). Has a strong effect on crustaceans and insects and a weaker effect on mammals (By similarity). It strongly inhibits D.melanogaster sodium channel (DmNav1) (PubMed:19609479). It strongly affects the heart sodium channels (Nav1.5/SCN5A) and weakly inhibits the brain sodium channel Nav1.2/SCN2A (By similarity). In vivo, when released into the medium, this recombinant toxin induces impaired swimming, paralysis and death of the crustacean A.nauplii within several hours (PubMed:22048953). Its effect on zebrafish (D.rerio) larvae is much faster, since it induces paralysis or strong convulsion and impaired swimming, within 10 minutes (PubMed:22048953).</text>
</comment>
<comment type="subcellular location">
    <subcellularLocation>
        <location evidence="9">Secreted</location>
    </subcellularLocation>
    <subcellularLocation>
        <location evidence="9">Nematocyst</location>
    </subcellularLocation>
    <text evidence="9">In nematocyst, is associated with the tubule prior to discharge.</text>
</comment>
<comment type="tissue specificity">
    <text evidence="9">Expressed in gland cells and nematocytes.</text>
</comment>
<comment type="miscellaneous">
    <text evidence="3">This protein is encoded by at least 3 different genes. At least 3 other genes code for a similar Av2 with a Val (instead an Ile) at position 35.</text>
</comment>
<comment type="similarity">
    <text evidence="8">Belongs to the sea anemone sodium channel inhibitory toxin family. Type I subfamily.</text>
</comment>
<comment type="caution">
    <text evidence="8">Opinions are divided on whether Anemonia viridis (Forsskal, 1775) and Anemonia sulcata (Pennant, 1777) are separate species.</text>
</comment>
<feature type="signal peptide" evidence="2">
    <location>
        <begin position="1"/>
        <end position="21"/>
    </location>
</feature>
<feature type="propeptide" id="PRO_0000433683" evidence="1">
    <location>
        <begin position="22"/>
        <end position="31"/>
    </location>
</feature>
<feature type="chain" id="PRO_0000433796" description="Delta-actitoxin-Avd1e 2">
    <location>
        <begin position="34"/>
        <end position="80"/>
    </location>
</feature>
<feature type="disulfide bond" evidence="1">
    <location>
        <begin position="37"/>
        <end position="77"/>
    </location>
</feature>
<feature type="disulfide bond" evidence="1">
    <location>
        <begin position="39"/>
        <end position="67"/>
    </location>
</feature>
<feature type="disulfide bond" evidence="1">
    <location>
        <begin position="60"/>
        <end position="78"/>
    </location>
</feature>
<feature type="mutagenesis site" description="In vivo, slightly affects fish larvae after several hours." evidence="5">
    <original>L</original>
    <variation>A</variation>
    <location>
        <position position="38"/>
    </location>
</feature>
<reference key="1">
    <citation type="journal article" date="2008" name="Mol. Biol. Evol.">
        <title>Concerted evolution of sea anemone neurotoxin genes is revealed through analysis of the Nematostella vectensis genome.</title>
        <authorList>
            <person name="Moran Y."/>
            <person name="Weinberger H."/>
            <person name="Sullivan J.C."/>
            <person name="Reitzel A.M."/>
            <person name="Finnerty J.R."/>
            <person name="Gurevitz M."/>
        </authorList>
    </citation>
    <scope>NUCLEOTIDE SEQUENCE [GENOMIC DNA / MRNA]</scope>
</reference>
<reference key="2">
    <citation type="journal article" date="2009" name="J. Mol. Evol.">
        <title>Fusion and retrotransposition events in the evolution of the sea anemone Anemonia viridis neurotoxin genes.</title>
        <authorList>
            <person name="Moran Y."/>
            <person name="Weinberger H."/>
            <person name="Lazarus N."/>
            <person name="Gur M."/>
            <person name="Kahn R."/>
            <person name="Gordon D."/>
            <person name="Gurevitz M."/>
        </authorList>
    </citation>
    <scope>FUNCTION</scope>
    <scope>RECOMBINANT EXPRESSION</scope>
</reference>
<reference key="3">
    <citation type="journal article" date="2012" name="Proc. R. Soc. B">
        <title>Neurotoxin localization to ectodermal gland cells uncovers an alternative mechanism of venom delivery in sea anemones.</title>
        <authorList>
            <person name="Moran Y."/>
            <person name="Genikhovich G."/>
            <person name="Gordon D."/>
            <person name="Wienkoop S."/>
            <person name="Zenkert C."/>
            <person name="Ozbek S."/>
            <person name="Technau U."/>
            <person name="Gurevitz M."/>
        </authorList>
    </citation>
    <scope>FUNCTION</scope>
    <scope>SUBCELLULAR LOCATION</scope>
    <scope>TISSUE SPECIFICITY</scope>
    <scope>MUTAGENESIS OF LEU-38</scope>
</reference>
<reference key="4">
    <citation type="journal article" date="2012" name="Toxicon">
        <title>Development of a rational nomenclature for naming peptide and protein toxins from sea anemones.</title>
        <authorList>
            <person name="Oliveira J.S."/>
            <person name="Fuentes-Silva D."/>
            <person name="King G.F."/>
        </authorList>
    </citation>
    <scope>NOMENCLATURE</scope>
</reference>
<accession>P0DL53</accession>
<accession>B1NWR3</accession>
<evidence type="ECO:0000250" key="1">
    <source>
        <dbReference type="UniProtKB" id="P01528"/>
    </source>
</evidence>
<evidence type="ECO:0000255" key="2"/>
<evidence type="ECO:0000269" key="3">
    <source>
    </source>
</evidence>
<evidence type="ECO:0000269" key="4">
    <source>
    </source>
</evidence>
<evidence type="ECO:0000269" key="5">
    <source>
    </source>
</evidence>
<evidence type="ECO:0000303" key="6">
    <source>
    </source>
</evidence>
<evidence type="ECO:0000303" key="7">
    <source>
    </source>
</evidence>
<evidence type="ECO:0000305" key="8"/>
<evidence type="ECO:0000305" key="9">
    <source>
    </source>
</evidence>
<evidence type="ECO:0000312" key="10">
    <source>
        <dbReference type="EMBL" id="ABW97330.1"/>
    </source>
</evidence>
<keyword id="KW-0165">Cleavage on pair of basic residues</keyword>
<keyword id="KW-1015">Disulfide bond</keyword>
<keyword id="KW-0872">Ion channel impairing toxin</keyword>
<keyword id="KW-0166">Nematocyst</keyword>
<keyword id="KW-0528">Neurotoxin</keyword>
<keyword id="KW-0964">Secreted</keyword>
<keyword id="KW-0732">Signal</keyword>
<keyword id="KW-0800">Toxin</keyword>
<keyword id="KW-0738">Voltage-gated sodium channel impairing toxin</keyword>
<protein>
    <recommendedName>
        <fullName evidence="7">Delta-actitoxin-Avd1e 2</fullName>
        <shortName evidence="7">Delta-AITX-Avd1e 2</shortName>
    </recommendedName>
    <alternativeName>
        <fullName evidence="10">ATX-II</fullName>
    </alternativeName>
    <alternativeName>
        <fullName evidence="6">Av2</fullName>
    </alternativeName>
    <alternativeName>
        <fullName evidence="10">Toxin 2-5</fullName>
    </alternativeName>
</protein>
<proteinExistence type="evidence at protein level"/>